<proteinExistence type="evidence at transcript level"/>
<evidence type="ECO:0000250" key="1">
    <source>
        <dbReference type="UniProtKB" id="O64879"/>
    </source>
</evidence>
<evidence type="ECO:0000250" key="2">
    <source>
        <dbReference type="UniProtKB" id="Q1XH05"/>
    </source>
</evidence>
<evidence type="ECO:0000250" key="3">
    <source>
        <dbReference type="UniProtKB" id="Q7XSK0"/>
    </source>
</evidence>
<evidence type="ECO:0000250" key="4">
    <source>
        <dbReference type="UniProtKB" id="Q9SPP9"/>
    </source>
</evidence>
<evidence type="ECO:0000255" key="5"/>
<evidence type="ECO:0000255" key="6">
    <source>
        <dbReference type="PROSITE-ProRule" id="PRU00498"/>
    </source>
</evidence>
<evidence type="ECO:0000303" key="7">
    <source>
    </source>
</evidence>
<evidence type="ECO:0000303" key="8">
    <source>
    </source>
</evidence>
<evidence type="ECO:0000305" key="9"/>
<evidence type="ECO:0000312" key="10">
    <source>
        <dbReference type="Araport" id="AT1G02850"/>
    </source>
</evidence>
<evidence type="ECO:0000312" key="11">
    <source>
        <dbReference type="EMBL" id="AAF02882.1"/>
    </source>
</evidence>
<name>BGL11_ARATH</name>
<comment type="catalytic activity">
    <reaction evidence="1">
        <text>Hydrolysis of terminal, non-reducing beta-D-glucosyl residues with release of beta-D-glucose.</text>
        <dbReference type="EC" id="3.2.1.21"/>
    </reaction>
</comment>
<comment type="alternative products">
    <event type="alternative splicing"/>
    <isoform>
        <id>B3H5Q1-1</id>
        <name>1</name>
        <sequence type="displayed"/>
    </isoform>
    <isoform>
        <id>B3H5Q1-2</id>
        <name>2</name>
        <sequence type="described" ref="VSP_038454"/>
    </isoform>
    <isoform>
        <id>B3H5Q1-3</id>
        <name>3</name>
        <sequence type="described" ref="VSP_038453 VSP_038454"/>
    </isoform>
    <isoform>
        <id>B3H5Q1-4</id>
        <name>4</name>
        <sequence type="described" ref="VSP_038452 VSP_038454"/>
    </isoform>
    <isoform>
        <id>B3H5Q1-5</id>
        <name>5</name>
        <sequence type="described" ref="VSP_038451 VSP_038454"/>
    </isoform>
</comment>
<comment type="similarity">
    <text evidence="9">Belongs to the glycosyl hydrolase 1 family.</text>
</comment>
<comment type="sequence caution" evidence="9">
    <conflict type="erroneous gene model prediction">
        <sequence resource="EMBL-CDS" id="AAF02882"/>
    </conflict>
</comment>
<keyword id="KW-0025">Alternative splicing</keyword>
<keyword id="KW-1015">Disulfide bond</keyword>
<keyword id="KW-0325">Glycoprotein</keyword>
<keyword id="KW-0326">Glycosidase</keyword>
<keyword id="KW-0378">Hydrolase</keyword>
<keyword id="KW-1185">Reference proteome</keyword>
<keyword id="KW-0732">Signal</keyword>
<gene>
    <name evidence="8" type="primary">BGLU11</name>
    <name evidence="10" type="ordered locus">At1g02850</name>
    <name evidence="11" type="ORF">F22D16.15</name>
</gene>
<organism>
    <name type="scientific">Arabidopsis thaliana</name>
    <name type="common">Mouse-ear cress</name>
    <dbReference type="NCBI Taxonomy" id="3702"/>
    <lineage>
        <taxon>Eukaryota</taxon>
        <taxon>Viridiplantae</taxon>
        <taxon>Streptophyta</taxon>
        <taxon>Embryophyta</taxon>
        <taxon>Tracheophyta</taxon>
        <taxon>Spermatophyta</taxon>
        <taxon>Magnoliopsida</taxon>
        <taxon>eudicotyledons</taxon>
        <taxon>Gunneridae</taxon>
        <taxon>Pentapetalae</taxon>
        <taxon>rosids</taxon>
        <taxon>malvids</taxon>
        <taxon>Brassicales</taxon>
        <taxon>Brassicaceae</taxon>
        <taxon>Camelineae</taxon>
        <taxon>Arabidopsis</taxon>
    </lineage>
</organism>
<reference key="1">
    <citation type="journal article" date="2000" name="Nature">
        <title>Sequence and analysis of chromosome 1 of the plant Arabidopsis thaliana.</title>
        <authorList>
            <person name="Theologis A."/>
            <person name="Ecker J.R."/>
            <person name="Palm C.J."/>
            <person name="Federspiel N.A."/>
            <person name="Kaul S."/>
            <person name="White O."/>
            <person name="Alonso J."/>
            <person name="Altafi H."/>
            <person name="Araujo R."/>
            <person name="Bowman C.L."/>
            <person name="Brooks S.Y."/>
            <person name="Buehler E."/>
            <person name="Chan A."/>
            <person name="Chao Q."/>
            <person name="Chen H."/>
            <person name="Cheuk R.F."/>
            <person name="Chin C.W."/>
            <person name="Chung M.K."/>
            <person name="Conn L."/>
            <person name="Conway A.B."/>
            <person name="Conway A.R."/>
            <person name="Creasy T.H."/>
            <person name="Dewar K."/>
            <person name="Dunn P."/>
            <person name="Etgu P."/>
            <person name="Feldblyum T.V."/>
            <person name="Feng J.-D."/>
            <person name="Fong B."/>
            <person name="Fujii C.Y."/>
            <person name="Gill J.E."/>
            <person name="Goldsmith A.D."/>
            <person name="Haas B."/>
            <person name="Hansen N.F."/>
            <person name="Hughes B."/>
            <person name="Huizar L."/>
            <person name="Hunter J.L."/>
            <person name="Jenkins J."/>
            <person name="Johnson-Hopson C."/>
            <person name="Khan S."/>
            <person name="Khaykin E."/>
            <person name="Kim C.J."/>
            <person name="Koo H.L."/>
            <person name="Kremenetskaia I."/>
            <person name="Kurtz D.B."/>
            <person name="Kwan A."/>
            <person name="Lam B."/>
            <person name="Langin-Hooper S."/>
            <person name="Lee A."/>
            <person name="Lee J.M."/>
            <person name="Lenz C.A."/>
            <person name="Li J.H."/>
            <person name="Li Y.-P."/>
            <person name="Lin X."/>
            <person name="Liu S.X."/>
            <person name="Liu Z.A."/>
            <person name="Luros J.S."/>
            <person name="Maiti R."/>
            <person name="Marziali A."/>
            <person name="Militscher J."/>
            <person name="Miranda M."/>
            <person name="Nguyen M."/>
            <person name="Nierman W.C."/>
            <person name="Osborne B.I."/>
            <person name="Pai G."/>
            <person name="Peterson J."/>
            <person name="Pham P.K."/>
            <person name="Rizzo M."/>
            <person name="Rooney T."/>
            <person name="Rowley D."/>
            <person name="Sakano H."/>
            <person name="Salzberg S.L."/>
            <person name="Schwartz J.R."/>
            <person name="Shinn P."/>
            <person name="Southwick A.M."/>
            <person name="Sun H."/>
            <person name="Tallon L.J."/>
            <person name="Tambunga G."/>
            <person name="Toriumi M.J."/>
            <person name="Town C.D."/>
            <person name="Utterback T."/>
            <person name="Van Aken S."/>
            <person name="Vaysberg M."/>
            <person name="Vysotskaia V.S."/>
            <person name="Walker M."/>
            <person name="Wu D."/>
            <person name="Yu G."/>
            <person name="Fraser C.M."/>
            <person name="Venter J.C."/>
            <person name="Davis R.W."/>
        </authorList>
    </citation>
    <scope>NUCLEOTIDE SEQUENCE [LARGE SCALE GENOMIC DNA]</scope>
    <source>
        <strain>cv. Columbia</strain>
    </source>
</reference>
<reference key="2">
    <citation type="journal article" date="2017" name="Plant J.">
        <title>Araport11: a complete reannotation of the Arabidopsis thaliana reference genome.</title>
        <authorList>
            <person name="Cheng C.Y."/>
            <person name="Krishnakumar V."/>
            <person name="Chan A.P."/>
            <person name="Thibaud-Nissen F."/>
            <person name="Schobel S."/>
            <person name="Town C.D."/>
        </authorList>
    </citation>
    <scope>GENOME REANNOTATION</scope>
    <source>
        <strain>cv. Columbia</strain>
    </source>
</reference>
<reference key="3">
    <citation type="journal article" date="2003" name="Science">
        <title>Empirical analysis of transcriptional activity in the Arabidopsis genome.</title>
        <authorList>
            <person name="Yamada K."/>
            <person name="Lim J."/>
            <person name="Dale J.M."/>
            <person name="Chen H."/>
            <person name="Shinn P."/>
            <person name="Palm C.J."/>
            <person name="Southwick A.M."/>
            <person name="Wu H.C."/>
            <person name="Kim C.J."/>
            <person name="Nguyen M."/>
            <person name="Pham P.K."/>
            <person name="Cheuk R.F."/>
            <person name="Karlin-Newmann G."/>
            <person name="Liu S.X."/>
            <person name="Lam B."/>
            <person name="Sakano H."/>
            <person name="Wu T."/>
            <person name="Yu G."/>
            <person name="Miranda M."/>
            <person name="Quach H.L."/>
            <person name="Tripp M."/>
            <person name="Chang C.H."/>
            <person name="Lee J.M."/>
            <person name="Toriumi M.J."/>
            <person name="Chan M.M."/>
            <person name="Tang C.C."/>
            <person name="Onodera C.S."/>
            <person name="Deng J.M."/>
            <person name="Akiyama K."/>
            <person name="Ansari Y."/>
            <person name="Arakawa T."/>
            <person name="Banh J."/>
            <person name="Banno F."/>
            <person name="Bowser L."/>
            <person name="Brooks S.Y."/>
            <person name="Carninci P."/>
            <person name="Chao Q."/>
            <person name="Choy N."/>
            <person name="Enju A."/>
            <person name="Goldsmith A.D."/>
            <person name="Gurjal M."/>
            <person name="Hansen N.F."/>
            <person name="Hayashizaki Y."/>
            <person name="Johnson-Hopson C."/>
            <person name="Hsuan V.W."/>
            <person name="Iida K."/>
            <person name="Karnes M."/>
            <person name="Khan S."/>
            <person name="Koesema E."/>
            <person name="Ishida J."/>
            <person name="Jiang P.X."/>
            <person name="Jones T."/>
            <person name="Kawai J."/>
            <person name="Kamiya A."/>
            <person name="Meyers C."/>
            <person name="Nakajima M."/>
            <person name="Narusaka M."/>
            <person name="Seki M."/>
            <person name="Sakurai T."/>
            <person name="Satou M."/>
            <person name="Tamse R."/>
            <person name="Vaysberg M."/>
            <person name="Wallender E.K."/>
            <person name="Wong C."/>
            <person name="Yamamura Y."/>
            <person name="Yuan S."/>
            <person name="Shinozaki K."/>
            <person name="Davis R.W."/>
            <person name="Theologis A."/>
            <person name="Ecker J.R."/>
        </authorList>
    </citation>
    <scope>NUCLEOTIDE SEQUENCE [LARGE SCALE MRNA] (ISOFORM 5)</scope>
    <source>
        <strain>cv. Columbia</strain>
    </source>
</reference>
<reference key="4">
    <citation type="journal article" date="2004" name="Plant Mol. Biol.">
        <title>Functional genomic analysis of Arabidopsis thaliana glycoside hydrolase family 1.</title>
        <authorList>
            <person name="Xu Z."/>
            <person name="Escamilla-Trevino L.L."/>
            <person name="Zeng L."/>
            <person name="Lalgondar M."/>
            <person name="Bevan D.R."/>
            <person name="Winkel B.S.J."/>
            <person name="Mohamed A."/>
            <person name="Cheng C.-L."/>
            <person name="Shih M.-C."/>
            <person name="Poulton J.E."/>
            <person name="Esen A."/>
        </authorList>
    </citation>
    <scope>GENE FAMILY</scope>
    <scope>NOMENCLATURE</scope>
</reference>
<accession>B3H5Q1</accession>
<accession>A8MRZ0</accession>
<accession>Q3EDK1</accession>
<accession>Q94A86</accession>
<accession>Q9SRX8</accession>
<sequence>MKLLSNSLMFLPLLALALTAVSSLKYSRNDFPPGFVFGSGTSAYQVEGAADEDGRTPSIWDVFAHAGHSGVAAGNVACDQYHKYKEDVKLMADMGLEAYRFSISWSRLLPSGRGPINPKGLQYYNNLIDELITHGIQPHVTLHHFDLPQALEDEYGGWLSQEIVRDFTAYADTCFKEFGDRVSHWTTINEVNVFALGGYDQGITPPARCSPPFGLNCTKGNSSIEPYIAVHNMLLAHASATILYKQQYKVLLSASLPSSICIAFCYVLFITQYKQHGSVGISVYTYGAVPLTNSVKDKQATARVNDFYIGWILHPLVFGDYPETMKTNVGSRLPAFTEEESEQVKGAFDFVGVINYMALYVKDNSSSLKPNLQDFNTDIAVEMTLVGNTSIENEYANTPWSLQQILLYVKETYGNPPVYILENGQMTPHSSSLVDTTRVKYLSSYIKAVLHSLSRKGSDVKGYFQWSLMDVFELFGGYERSFGLLYVDFKDPSLKRSPKLSAHWYSSFLKGTLHHPSYASS</sequence>
<dbReference type="EC" id="3.2.1.21" evidence="1"/>
<dbReference type="EMBL" id="AC009525">
    <property type="protein sequence ID" value="AAF02882.1"/>
    <property type="status" value="ALT_SEQ"/>
    <property type="molecule type" value="Genomic_DNA"/>
</dbReference>
<dbReference type="EMBL" id="CP002684">
    <property type="protein sequence ID" value="AEE27480.1"/>
    <property type="molecule type" value="Genomic_DNA"/>
</dbReference>
<dbReference type="EMBL" id="CP002684">
    <property type="protein sequence ID" value="AEE27482.1"/>
    <property type="molecule type" value="Genomic_DNA"/>
</dbReference>
<dbReference type="EMBL" id="CP002684">
    <property type="protein sequence ID" value="AEE27483.1"/>
    <property type="molecule type" value="Genomic_DNA"/>
</dbReference>
<dbReference type="EMBL" id="CP002684">
    <property type="protein sequence ID" value="AEE27484.1"/>
    <property type="molecule type" value="Genomic_DNA"/>
</dbReference>
<dbReference type="EMBL" id="AY049274">
    <property type="protein sequence ID" value="AAK83616.1"/>
    <property type="molecule type" value="mRNA"/>
</dbReference>
<dbReference type="EMBL" id="AY062763">
    <property type="protein sequence ID" value="AAL32841.1"/>
    <property type="molecule type" value="mRNA"/>
</dbReference>
<dbReference type="EMBL" id="BT001137">
    <property type="protein sequence ID" value="AAN64528.1"/>
    <property type="molecule type" value="mRNA"/>
</dbReference>
<dbReference type="PIR" id="G86158">
    <property type="entry name" value="G86158"/>
</dbReference>
<dbReference type="RefSeq" id="NP_001117217.1">
    <molecule id="B3H5Q1-2"/>
    <property type="nucleotide sequence ID" value="NM_001123745.2"/>
</dbReference>
<dbReference type="RefSeq" id="NP_563666.1">
    <molecule id="B3H5Q1-5"/>
    <property type="nucleotide sequence ID" value="NM_100166.4"/>
</dbReference>
<dbReference type="RefSeq" id="NP_849578.5">
    <molecule id="B3H5Q1-3"/>
    <property type="nucleotide sequence ID" value="NM_179247.6"/>
</dbReference>
<dbReference type="RefSeq" id="NP_973746.3">
    <molecule id="B3H5Q1-1"/>
    <property type="nucleotide sequence ID" value="NM_202017.3"/>
</dbReference>
<dbReference type="SMR" id="B3H5Q1"/>
<dbReference type="FunCoup" id="B3H5Q1">
    <property type="interactions" value="199"/>
</dbReference>
<dbReference type="STRING" id="3702.B3H5Q1"/>
<dbReference type="CAZy" id="GH1">
    <property type="family name" value="Glycoside Hydrolase Family 1"/>
</dbReference>
<dbReference type="GlyCosmos" id="B3H5Q1">
    <property type="glycosylation" value="4 sites, No reported glycans"/>
</dbReference>
<dbReference type="GlyGen" id="B3H5Q1">
    <property type="glycosylation" value="5 sites"/>
</dbReference>
<dbReference type="PaxDb" id="3702-AT1G02850.4"/>
<dbReference type="ProteomicsDB" id="240784">
    <molecule id="B3H5Q1-1"/>
</dbReference>
<dbReference type="EnsemblPlants" id="AT1G02850.1">
    <molecule id="B3H5Q1-5"/>
    <property type="protein sequence ID" value="AT1G02850.1"/>
    <property type="gene ID" value="AT1G02850"/>
</dbReference>
<dbReference type="EnsemblPlants" id="AT1G02850.2">
    <molecule id="B3H5Q1-3"/>
    <property type="protein sequence ID" value="AT1G02850.2"/>
    <property type="gene ID" value="AT1G02850"/>
</dbReference>
<dbReference type="EnsemblPlants" id="AT1G02850.4">
    <molecule id="B3H5Q1-1"/>
    <property type="protein sequence ID" value="AT1G02850.4"/>
    <property type="gene ID" value="AT1G02850"/>
</dbReference>
<dbReference type="EnsemblPlants" id="AT1G02850.5">
    <molecule id="B3H5Q1-2"/>
    <property type="protein sequence ID" value="AT1G02850.5"/>
    <property type="gene ID" value="AT1G02850"/>
</dbReference>
<dbReference type="GeneID" id="839435"/>
<dbReference type="Gramene" id="AT1G02850.1">
    <molecule id="B3H5Q1-5"/>
    <property type="protein sequence ID" value="AT1G02850.1"/>
    <property type="gene ID" value="AT1G02850"/>
</dbReference>
<dbReference type="Gramene" id="AT1G02850.2">
    <molecule id="B3H5Q1-3"/>
    <property type="protein sequence ID" value="AT1G02850.2"/>
    <property type="gene ID" value="AT1G02850"/>
</dbReference>
<dbReference type="Gramene" id="AT1G02850.4">
    <molecule id="B3H5Q1-1"/>
    <property type="protein sequence ID" value="AT1G02850.4"/>
    <property type="gene ID" value="AT1G02850"/>
</dbReference>
<dbReference type="Gramene" id="AT1G02850.5">
    <molecule id="B3H5Q1-2"/>
    <property type="protein sequence ID" value="AT1G02850.5"/>
    <property type="gene ID" value="AT1G02850"/>
</dbReference>
<dbReference type="KEGG" id="ath:AT1G02850"/>
<dbReference type="Araport" id="AT1G02850"/>
<dbReference type="TAIR" id="AT1G02850">
    <property type="gene designation" value="BGLU11"/>
</dbReference>
<dbReference type="eggNOG" id="KOG0626">
    <property type="taxonomic scope" value="Eukaryota"/>
</dbReference>
<dbReference type="InParanoid" id="B3H5Q1"/>
<dbReference type="OMA" id="VKCANVA"/>
<dbReference type="OrthoDB" id="65569at2759"/>
<dbReference type="PhylomeDB" id="B3H5Q1"/>
<dbReference type="BioCyc" id="ARA:AT1G02850-MONOMER"/>
<dbReference type="PRO" id="PR:B3H5Q1"/>
<dbReference type="Proteomes" id="UP000006548">
    <property type="component" value="Chromosome 1"/>
</dbReference>
<dbReference type="ExpressionAtlas" id="B3H5Q1">
    <property type="expression patterns" value="baseline and differential"/>
</dbReference>
<dbReference type="GO" id="GO:0008422">
    <property type="term" value="F:beta-glucosidase activity"/>
    <property type="evidence" value="ECO:0007669"/>
    <property type="project" value="UniProtKB-EC"/>
</dbReference>
<dbReference type="GO" id="GO:0005975">
    <property type="term" value="P:carbohydrate metabolic process"/>
    <property type="evidence" value="ECO:0007669"/>
    <property type="project" value="InterPro"/>
</dbReference>
<dbReference type="FunFam" id="3.20.20.80:FF:000069">
    <property type="entry name" value="Beta-glucosidase 1"/>
    <property type="match status" value="1"/>
</dbReference>
<dbReference type="Gene3D" id="3.20.20.80">
    <property type="entry name" value="Glycosidases"/>
    <property type="match status" value="1"/>
</dbReference>
<dbReference type="InterPro" id="IPR001360">
    <property type="entry name" value="Glyco_hydro_1"/>
</dbReference>
<dbReference type="InterPro" id="IPR033132">
    <property type="entry name" value="Glyco_hydro_1_N_CS"/>
</dbReference>
<dbReference type="InterPro" id="IPR017853">
    <property type="entry name" value="Glycoside_hydrolase_SF"/>
</dbReference>
<dbReference type="PANTHER" id="PTHR10353:SF29">
    <property type="entry name" value="BETA-GLUCOSIDASE 11"/>
    <property type="match status" value="1"/>
</dbReference>
<dbReference type="PANTHER" id="PTHR10353">
    <property type="entry name" value="GLYCOSYL HYDROLASE"/>
    <property type="match status" value="1"/>
</dbReference>
<dbReference type="Pfam" id="PF00232">
    <property type="entry name" value="Glyco_hydro_1"/>
    <property type="match status" value="1"/>
</dbReference>
<dbReference type="PRINTS" id="PR00131">
    <property type="entry name" value="GLHYDRLASE1"/>
</dbReference>
<dbReference type="SUPFAM" id="SSF51445">
    <property type="entry name" value="(Trans)glycosidases"/>
    <property type="match status" value="1"/>
</dbReference>
<dbReference type="PROSITE" id="PS00653">
    <property type="entry name" value="GLYCOSYL_HYDROL_F1_2"/>
    <property type="match status" value="1"/>
</dbReference>
<feature type="signal peptide" evidence="5">
    <location>
        <begin position="1"/>
        <end position="23"/>
    </location>
</feature>
<feature type="chain" id="PRO_0000389574" description="Beta-glucosidase 11">
    <location>
        <begin position="24"/>
        <end position="521"/>
    </location>
</feature>
<feature type="active site" description="Proton donor" evidence="3">
    <location>
        <position position="190"/>
    </location>
</feature>
<feature type="active site" description="Nucleophile" evidence="3">
    <location>
        <position position="422"/>
    </location>
</feature>
<feature type="binding site" evidence="3">
    <location>
        <position position="45"/>
    </location>
    <ligand>
        <name>a beta-D-glucoside</name>
        <dbReference type="ChEBI" id="CHEBI:22798"/>
    </ligand>
</feature>
<feature type="binding site" evidence="3">
    <location>
        <position position="144"/>
    </location>
    <ligand>
        <name>a beta-D-glucoside</name>
        <dbReference type="ChEBI" id="CHEBI:22798"/>
    </ligand>
</feature>
<feature type="binding site" evidence="3">
    <location>
        <begin position="189"/>
        <end position="190"/>
    </location>
    <ligand>
        <name>a beta-D-glucoside</name>
        <dbReference type="ChEBI" id="CHEBI:22798"/>
    </ligand>
</feature>
<feature type="binding site" evidence="3">
    <location>
        <position position="356"/>
    </location>
    <ligand>
        <name>a beta-D-glucoside</name>
        <dbReference type="ChEBI" id="CHEBI:22798"/>
    </ligand>
</feature>
<feature type="binding site" evidence="4">
    <location>
        <position position="422"/>
    </location>
    <ligand>
        <name>a beta-D-glucoside</name>
        <dbReference type="ChEBI" id="CHEBI:22798"/>
    </ligand>
</feature>
<feature type="binding site" evidence="3">
    <location>
        <position position="466"/>
    </location>
    <ligand>
        <name>a beta-D-glucoside</name>
        <dbReference type="ChEBI" id="CHEBI:22798"/>
    </ligand>
</feature>
<feature type="binding site" evidence="2">
    <location>
        <position position="482"/>
    </location>
    <ligand>
        <name>a beta-D-glucoside</name>
        <dbReference type="ChEBI" id="CHEBI:22798"/>
    </ligand>
</feature>
<feature type="glycosylation site" description="N-linked (GlcNAc...) asparagine" evidence="6">
    <location>
        <position position="216"/>
    </location>
</feature>
<feature type="glycosylation site" description="N-linked (GlcNAc...) asparagine" evidence="6">
    <location>
        <position position="221"/>
    </location>
</feature>
<feature type="glycosylation site" description="N-linked (GlcNAc...) asparagine" evidence="6">
    <location>
        <position position="364"/>
    </location>
</feature>
<feature type="glycosylation site" description="N-linked (GlcNAc...) asparagine" evidence="6">
    <location>
        <position position="388"/>
    </location>
</feature>
<feature type="disulfide bond" evidence="3">
    <location>
        <begin position="209"/>
        <end position="217"/>
    </location>
</feature>
<feature type="splice variant" id="VSP_038451" description="In isoform 5." evidence="7">
    <location>
        <begin position="250"/>
        <end position="299"/>
    </location>
</feature>
<feature type="splice variant" id="VSP_038452" description="In isoform 4." evidence="9">
    <location>
        <begin position="250"/>
        <end position="296"/>
    </location>
</feature>
<feature type="splice variant" id="VSP_038453" description="In isoform 3." evidence="9">
    <location>
        <begin position="250"/>
        <end position="272"/>
    </location>
</feature>
<feature type="splice variant" id="VSP_038454" description="In isoform 2, isoform 3, isoform 4 and isoform 5." evidence="7">
    <location>
        <position position="454"/>
    </location>
</feature>
<protein>
    <recommendedName>
        <fullName evidence="8">Beta-glucosidase 11</fullName>
        <shortName evidence="8">AtBGLU11</shortName>
        <ecNumber evidence="1">3.2.1.21</ecNumber>
    </recommendedName>
</protein>